<protein>
    <recommendedName>
        <fullName evidence="1">Serine--tRNA ligase</fullName>
        <ecNumber evidence="1">6.1.1.11</ecNumber>
    </recommendedName>
    <alternativeName>
        <fullName evidence="1">Seryl-tRNA synthetase</fullName>
        <shortName evidence="1">SerRS</shortName>
    </alternativeName>
    <alternativeName>
        <fullName evidence="1">Seryl-tRNA(Ser/Sec) synthetase</fullName>
    </alternativeName>
</protein>
<sequence>MLDPNMLRNELDAVAEKLARRGFKLDVEMLRQQEERRKVLQVETESLQAERNSRSKLIGAAKARGEDIEPLRLEVNELGEKLDAAKAELDKLQNEIRDLALSIPNLPDDSVPVGKDENDNLEVSRWGEPRQYDFEVRDHVSLGEMAGGLDFAAAVKLTGARFVVMKGQIARMHRALAQFMLDLHTEKHGYLETYVPYLVNHATLYGTGQLPKFGGDLFHTKPLEEESDSSNYALIPTAEVPVTNLVRDEILEEESLPLKMTAHTPCFRSEAGSYGRDTRGLIRMHQFDKVEMVQITRPEDSMAALEELTGHAEKVLQLLELPYRKMLLCTGDMGFGSSKTYDLEVWLPAQNTYREISSCSNMWDFQARRMQARCRNKTDRKTRLVHTLNGSGLAVGRTLVAVLENYQQADGRIQVPEVLRPYMGGLEFIG</sequence>
<feature type="chain" id="PRO_1000019869" description="Serine--tRNA ligase">
    <location>
        <begin position="1"/>
        <end position="430"/>
    </location>
</feature>
<feature type="binding site" evidence="1">
    <location>
        <begin position="237"/>
        <end position="239"/>
    </location>
    <ligand>
        <name>L-serine</name>
        <dbReference type="ChEBI" id="CHEBI:33384"/>
    </ligand>
</feature>
<feature type="binding site" evidence="1">
    <location>
        <begin position="268"/>
        <end position="270"/>
    </location>
    <ligand>
        <name>ATP</name>
        <dbReference type="ChEBI" id="CHEBI:30616"/>
    </ligand>
</feature>
<feature type="binding site" evidence="1">
    <location>
        <position position="291"/>
    </location>
    <ligand>
        <name>L-serine</name>
        <dbReference type="ChEBI" id="CHEBI:33384"/>
    </ligand>
</feature>
<feature type="binding site" evidence="1">
    <location>
        <begin position="355"/>
        <end position="358"/>
    </location>
    <ligand>
        <name>ATP</name>
        <dbReference type="ChEBI" id="CHEBI:30616"/>
    </ligand>
</feature>
<feature type="binding site" evidence="1">
    <location>
        <position position="391"/>
    </location>
    <ligand>
        <name>L-serine</name>
        <dbReference type="ChEBI" id="CHEBI:33384"/>
    </ligand>
</feature>
<dbReference type="EC" id="6.1.1.11" evidence="1"/>
<dbReference type="EMBL" id="AM286415">
    <property type="protein sequence ID" value="CAL11607.1"/>
    <property type="molecule type" value="Genomic_DNA"/>
</dbReference>
<dbReference type="RefSeq" id="WP_005162747.1">
    <property type="nucleotide sequence ID" value="NC_008800.1"/>
</dbReference>
<dbReference type="RefSeq" id="YP_001005823.1">
    <property type="nucleotide sequence ID" value="NC_008800.1"/>
</dbReference>
<dbReference type="SMR" id="A1JMG0"/>
<dbReference type="GeneID" id="31408568"/>
<dbReference type="KEGG" id="yen:YE1528"/>
<dbReference type="PATRIC" id="fig|393305.7.peg.1655"/>
<dbReference type="eggNOG" id="COG0172">
    <property type="taxonomic scope" value="Bacteria"/>
</dbReference>
<dbReference type="HOGENOM" id="CLU_023797_1_1_6"/>
<dbReference type="OrthoDB" id="9804647at2"/>
<dbReference type="UniPathway" id="UPA00906">
    <property type="reaction ID" value="UER00895"/>
</dbReference>
<dbReference type="Proteomes" id="UP000000642">
    <property type="component" value="Chromosome"/>
</dbReference>
<dbReference type="GO" id="GO:0005737">
    <property type="term" value="C:cytoplasm"/>
    <property type="evidence" value="ECO:0007669"/>
    <property type="project" value="UniProtKB-SubCell"/>
</dbReference>
<dbReference type="GO" id="GO:0005524">
    <property type="term" value="F:ATP binding"/>
    <property type="evidence" value="ECO:0007669"/>
    <property type="project" value="UniProtKB-UniRule"/>
</dbReference>
<dbReference type="GO" id="GO:0004828">
    <property type="term" value="F:serine-tRNA ligase activity"/>
    <property type="evidence" value="ECO:0007669"/>
    <property type="project" value="UniProtKB-UniRule"/>
</dbReference>
<dbReference type="GO" id="GO:0016260">
    <property type="term" value="P:selenocysteine biosynthetic process"/>
    <property type="evidence" value="ECO:0007669"/>
    <property type="project" value="UniProtKB-UniRule"/>
</dbReference>
<dbReference type="GO" id="GO:0006434">
    <property type="term" value="P:seryl-tRNA aminoacylation"/>
    <property type="evidence" value="ECO:0007669"/>
    <property type="project" value="UniProtKB-UniRule"/>
</dbReference>
<dbReference type="CDD" id="cd00770">
    <property type="entry name" value="SerRS_core"/>
    <property type="match status" value="1"/>
</dbReference>
<dbReference type="FunFam" id="1.10.287.40:FF:000001">
    <property type="entry name" value="Serine--tRNA ligase"/>
    <property type="match status" value="1"/>
</dbReference>
<dbReference type="FunFam" id="3.30.930.10:FF:000018">
    <property type="entry name" value="Serine--tRNA ligase"/>
    <property type="match status" value="1"/>
</dbReference>
<dbReference type="Gene3D" id="3.30.930.10">
    <property type="entry name" value="Bira Bifunctional Protein, Domain 2"/>
    <property type="match status" value="1"/>
</dbReference>
<dbReference type="Gene3D" id="1.10.287.40">
    <property type="entry name" value="Serine-tRNA synthetase, tRNA binding domain"/>
    <property type="match status" value="1"/>
</dbReference>
<dbReference type="HAMAP" id="MF_00176">
    <property type="entry name" value="Ser_tRNA_synth_type1"/>
    <property type="match status" value="1"/>
</dbReference>
<dbReference type="InterPro" id="IPR002314">
    <property type="entry name" value="aa-tRNA-synt_IIb"/>
</dbReference>
<dbReference type="InterPro" id="IPR006195">
    <property type="entry name" value="aa-tRNA-synth_II"/>
</dbReference>
<dbReference type="InterPro" id="IPR045864">
    <property type="entry name" value="aa-tRNA-synth_II/BPL/LPL"/>
</dbReference>
<dbReference type="InterPro" id="IPR002317">
    <property type="entry name" value="Ser-tRNA-ligase_type_1"/>
</dbReference>
<dbReference type="InterPro" id="IPR015866">
    <property type="entry name" value="Ser-tRNA-synth_1_N"/>
</dbReference>
<dbReference type="InterPro" id="IPR042103">
    <property type="entry name" value="SerRS_1_N_sf"/>
</dbReference>
<dbReference type="InterPro" id="IPR033729">
    <property type="entry name" value="SerRS_core"/>
</dbReference>
<dbReference type="InterPro" id="IPR010978">
    <property type="entry name" value="tRNA-bd_arm"/>
</dbReference>
<dbReference type="NCBIfam" id="TIGR00414">
    <property type="entry name" value="serS"/>
    <property type="match status" value="1"/>
</dbReference>
<dbReference type="PANTHER" id="PTHR43697:SF1">
    <property type="entry name" value="SERINE--TRNA LIGASE"/>
    <property type="match status" value="1"/>
</dbReference>
<dbReference type="PANTHER" id="PTHR43697">
    <property type="entry name" value="SERYL-TRNA SYNTHETASE"/>
    <property type="match status" value="1"/>
</dbReference>
<dbReference type="Pfam" id="PF02403">
    <property type="entry name" value="Seryl_tRNA_N"/>
    <property type="match status" value="1"/>
</dbReference>
<dbReference type="Pfam" id="PF00587">
    <property type="entry name" value="tRNA-synt_2b"/>
    <property type="match status" value="1"/>
</dbReference>
<dbReference type="PIRSF" id="PIRSF001529">
    <property type="entry name" value="Ser-tRNA-synth_IIa"/>
    <property type="match status" value="1"/>
</dbReference>
<dbReference type="PRINTS" id="PR00981">
    <property type="entry name" value="TRNASYNTHSER"/>
</dbReference>
<dbReference type="SUPFAM" id="SSF55681">
    <property type="entry name" value="Class II aaRS and biotin synthetases"/>
    <property type="match status" value="1"/>
</dbReference>
<dbReference type="SUPFAM" id="SSF46589">
    <property type="entry name" value="tRNA-binding arm"/>
    <property type="match status" value="1"/>
</dbReference>
<dbReference type="PROSITE" id="PS50862">
    <property type="entry name" value="AA_TRNA_LIGASE_II"/>
    <property type="match status" value="1"/>
</dbReference>
<accession>A1JMG0</accession>
<gene>
    <name evidence="1" type="primary">serS</name>
    <name type="ordered locus">YE1528</name>
</gene>
<organism>
    <name type="scientific">Yersinia enterocolitica serotype O:8 / biotype 1B (strain NCTC 13174 / 8081)</name>
    <dbReference type="NCBI Taxonomy" id="393305"/>
    <lineage>
        <taxon>Bacteria</taxon>
        <taxon>Pseudomonadati</taxon>
        <taxon>Pseudomonadota</taxon>
        <taxon>Gammaproteobacteria</taxon>
        <taxon>Enterobacterales</taxon>
        <taxon>Yersiniaceae</taxon>
        <taxon>Yersinia</taxon>
    </lineage>
</organism>
<comment type="function">
    <text evidence="1">Catalyzes the attachment of serine to tRNA(Ser). Is also able to aminoacylate tRNA(Sec) with serine, to form the misacylated tRNA L-seryl-tRNA(Sec), which will be further converted into selenocysteinyl-tRNA(Sec).</text>
</comment>
<comment type="catalytic activity">
    <reaction evidence="1">
        <text>tRNA(Ser) + L-serine + ATP = L-seryl-tRNA(Ser) + AMP + diphosphate + H(+)</text>
        <dbReference type="Rhea" id="RHEA:12292"/>
        <dbReference type="Rhea" id="RHEA-COMP:9669"/>
        <dbReference type="Rhea" id="RHEA-COMP:9703"/>
        <dbReference type="ChEBI" id="CHEBI:15378"/>
        <dbReference type="ChEBI" id="CHEBI:30616"/>
        <dbReference type="ChEBI" id="CHEBI:33019"/>
        <dbReference type="ChEBI" id="CHEBI:33384"/>
        <dbReference type="ChEBI" id="CHEBI:78442"/>
        <dbReference type="ChEBI" id="CHEBI:78533"/>
        <dbReference type="ChEBI" id="CHEBI:456215"/>
        <dbReference type="EC" id="6.1.1.11"/>
    </reaction>
</comment>
<comment type="catalytic activity">
    <reaction evidence="1">
        <text>tRNA(Sec) + L-serine + ATP = L-seryl-tRNA(Sec) + AMP + diphosphate + H(+)</text>
        <dbReference type="Rhea" id="RHEA:42580"/>
        <dbReference type="Rhea" id="RHEA-COMP:9742"/>
        <dbReference type="Rhea" id="RHEA-COMP:10128"/>
        <dbReference type="ChEBI" id="CHEBI:15378"/>
        <dbReference type="ChEBI" id="CHEBI:30616"/>
        <dbReference type="ChEBI" id="CHEBI:33019"/>
        <dbReference type="ChEBI" id="CHEBI:33384"/>
        <dbReference type="ChEBI" id="CHEBI:78442"/>
        <dbReference type="ChEBI" id="CHEBI:78533"/>
        <dbReference type="ChEBI" id="CHEBI:456215"/>
        <dbReference type="EC" id="6.1.1.11"/>
    </reaction>
</comment>
<comment type="pathway">
    <text evidence="1">Aminoacyl-tRNA biosynthesis; selenocysteinyl-tRNA(Sec) biosynthesis; L-seryl-tRNA(Sec) from L-serine and tRNA(Sec): step 1/1.</text>
</comment>
<comment type="subunit">
    <text evidence="1">Homodimer. The tRNA molecule binds across the dimer.</text>
</comment>
<comment type="subcellular location">
    <subcellularLocation>
        <location evidence="1">Cytoplasm</location>
    </subcellularLocation>
</comment>
<comment type="domain">
    <text evidence="1">Consists of two distinct domains, a catalytic core and a N-terminal extension that is involved in tRNA binding.</text>
</comment>
<comment type="similarity">
    <text evidence="1">Belongs to the class-II aminoacyl-tRNA synthetase family. Type-1 seryl-tRNA synthetase subfamily.</text>
</comment>
<evidence type="ECO:0000255" key="1">
    <source>
        <dbReference type="HAMAP-Rule" id="MF_00176"/>
    </source>
</evidence>
<reference key="1">
    <citation type="journal article" date="2006" name="PLoS Genet.">
        <title>The complete genome sequence and comparative genome analysis of the high pathogenicity Yersinia enterocolitica strain 8081.</title>
        <authorList>
            <person name="Thomson N.R."/>
            <person name="Howard S."/>
            <person name="Wren B.W."/>
            <person name="Holden M.T.G."/>
            <person name="Crossman L."/>
            <person name="Challis G.L."/>
            <person name="Churcher C."/>
            <person name="Mungall K."/>
            <person name="Brooks K."/>
            <person name="Chillingworth T."/>
            <person name="Feltwell T."/>
            <person name="Abdellah Z."/>
            <person name="Hauser H."/>
            <person name="Jagels K."/>
            <person name="Maddison M."/>
            <person name="Moule S."/>
            <person name="Sanders M."/>
            <person name="Whitehead S."/>
            <person name="Quail M.A."/>
            <person name="Dougan G."/>
            <person name="Parkhill J."/>
            <person name="Prentice M.B."/>
        </authorList>
    </citation>
    <scope>NUCLEOTIDE SEQUENCE [LARGE SCALE GENOMIC DNA]</scope>
    <source>
        <strain>NCTC 13174 / 8081</strain>
    </source>
</reference>
<name>SYS_YERE8</name>
<keyword id="KW-0030">Aminoacyl-tRNA synthetase</keyword>
<keyword id="KW-0067">ATP-binding</keyword>
<keyword id="KW-0963">Cytoplasm</keyword>
<keyword id="KW-0436">Ligase</keyword>
<keyword id="KW-0547">Nucleotide-binding</keyword>
<keyword id="KW-0648">Protein biosynthesis</keyword>
<proteinExistence type="inferred from homology"/>